<comment type="function">
    <text evidence="1">It protects esophageal epithelia from hydrogen peroxide-induced oxidative stress. It suppresses acidic bile acid-induced reactive oxygen species (ROS) and protects against oxidative DNA damage and double-strand breaks (By similarity).</text>
</comment>
<comment type="catalytic activity">
    <reaction>
        <text>2 glutathione + H2O2 = glutathione disulfide + 2 H2O</text>
        <dbReference type="Rhea" id="RHEA:16833"/>
        <dbReference type="ChEBI" id="CHEBI:15377"/>
        <dbReference type="ChEBI" id="CHEBI:16240"/>
        <dbReference type="ChEBI" id="CHEBI:57925"/>
        <dbReference type="ChEBI" id="CHEBI:58297"/>
        <dbReference type="EC" id="1.11.1.9"/>
    </reaction>
</comment>
<comment type="subcellular location">
    <subcellularLocation>
        <location evidence="3">Secreted</location>
    </subcellularLocation>
</comment>
<comment type="similarity">
    <text evidence="3">Belongs to the glutathione peroxidase family.</text>
</comment>
<dbReference type="EC" id="1.11.1.9"/>
<dbReference type="EMBL" id="BC003228">
    <property type="protein sequence ID" value="AAH03228.1"/>
    <property type="molecule type" value="mRNA"/>
</dbReference>
<dbReference type="CCDS" id="CCDS18450.1"/>
<dbReference type="RefSeq" id="NP_077160.1">
    <property type="nucleotide sequence ID" value="NM_024198.3"/>
</dbReference>
<dbReference type="SMR" id="Q99LJ6"/>
<dbReference type="BioGRID" id="212090">
    <property type="interactions" value="2"/>
</dbReference>
<dbReference type="FunCoup" id="Q99LJ6">
    <property type="interactions" value="259"/>
</dbReference>
<dbReference type="STRING" id="10090.ENSMUSP00000030332"/>
<dbReference type="PeroxiBase" id="3720">
    <property type="entry name" value="MmGPx07"/>
</dbReference>
<dbReference type="PhosphoSitePlus" id="Q99LJ6"/>
<dbReference type="PaxDb" id="10090-ENSMUSP00000030332"/>
<dbReference type="ProteomicsDB" id="269628"/>
<dbReference type="Pumba" id="Q99LJ6"/>
<dbReference type="Antibodypedia" id="19147">
    <property type="antibodies" value="224 antibodies from 35 providers"/>
</dbReference>
<dbReference type="DNASU" id="67305"/>
<dbReference type="Ensembl" id="ENSMUST00000030332.7">
    <property type="protein sequence ID" value="ENSMUSP00000030332.7"/>
    <property type="gene ID" value="ENSMUSG00000028597.12"/>
</dbReference>
<dbReference type="GeneID" id="67305"/>
<dbReference type="KEGG" id="mmu:67305"/>
<dbReference type="UCSC" id="uc008ubc.1">
    <property type="organism name" value="mouse"/>
</dbReference>
<dbReference type="AGR" id="MGI:1914555"/>
<dbReference type="CTD" id="2882"/>
<dbReference type="MGI" id="MGI:1914555">
    <property type="gene designation" value="Gpx7"/>
</dbReference>
<dbReference type="VEuPathDB" id="HostDB:ENSMUSG00000028597"/>
<dbReference type="eggNOG" id="KOG1651">
    <property type="taxonomic scope" value="Eukaryota"/>
</dbReference>
<dbReference type="GeneTree" id="ENSGT00940000159127"/>
<dbReference type="HOGENOM" id="CLU_029507_0_1_1"/>
<dbReference type="InParanoid" id="Q99LJ6"/>
<dbReference type="OMA" id="QCGLTKQ"/>
<dbReference type="OrthoDB" id="446890at2759"/>
<dbReference type="PhylomeDB" id="Q99LJ6"/>
<dbReference type="TreeFam" id="TF331942"/>
<dbReference type="Reactome" id="R-MMU-3299685">
    <property type="pathway name" value="Detoxification of Reactive Oxygen Species"/>
</dbReference>
<dbReference type="BioGRID-ORCS" id="67305">
    <property type="hits" value="2 hits in 80 CRISPR screens"/>
</dbReference>
<dbReference type="ChiTaRS" id="Gpx7">
    <property type="organism name" value="mouse"/>
</dbReference>
<dbReference type="PRO" id="PR:Q99LJ6"/>
<dbReference type="Proteomes" id="UP000000589">
    <property type="component" value="Chromosome 4"/>
</dbReference>
<dbReference type="RNAct" id="Q99LJ6">
    <property type="molecule type" value="protein"/>
</dbReference>
<dbReference type="Bgee" id="ENSMUSG00000028597">
    <property type="expression patterns" value="Expressed in naris and 254 other cell types or tissues"/>
</dbReference>
<dbReference type="ExpressionAtlas" id="Q99LJ6">
    <property type="expression patterns" value="baseline and differential"/>
</dbReference>
<dbReference type="GO" id="GO:0005783">
    <property type="term" value="C:endoplasmic reticulum"/>
    <property type="evidence" value="ECO:0007669"/>
    <property type="project" value="Ensembl"/>
</dbReference>
<dbReference type="GO" id="GO:0005576">
    <property type="term" value="C:extracellular region"/>
    <property type="evidence" value="ECO:0007669"/>
    <property type="project" value="UniProtKB-SubCell"/>
</dbReference>
<dbReference type="GO" id="GO:0004096">
    <property type="term" value="F:catalase activity"/>
    <property type="evidence" value="ECO:0007669"/>
    <property type="project" value="Ensembl"/>
</dbReference>
<dbReference type="GO" id="GO:0004602">
    <property type="term" value="F:glutathione peroxidase activity"/>
    <property type="evidence" value="ECO:0007669"/>
    <property type="project" value="UniProtKB-EC"/>
</dbReference>
<dbReference type="GO" id="GO:0006979">
    <property type="term" value="P:response to oxidative stress"/>
    <property type="evidence" value="ECO:0007669"/>
    <property type="project" value="InterPro"/>
</dbReference>
<dbReference type="CDD" id="cd00340">
    <property type="entry name" value="GSH_Peroxidase"/>
    <property type="match status" value="1"/>
</dbReference>
<dbReference type="FunFam" id="3.40.30.10:FF:000049">
    <property type="entry name" value="Glutathione peroxidase"/>
    <property type="match status" value="1"/>
</dbReference>
<dbReference type="Gene3D" id="3.40.30.10">
    <property type="entry name" value="Glutaredoxin"/>
    <property type="match status" value="1"/>
</dbReference>
<dbReference type="InterPro" id="IPR013376">
    <property type="entry name" value="Glut_perox_Gpx7"/>
</dbReference>
<dbReference type="InterPro" id="IPR000889">
    <property type="entry name" value="Glutathione_peroxidase"/>
</dbReference>
<dbReference type="InterPro" id="IPR029759">
    <property type="entry name" value="GPX_AS"/>
</dbReference>
<dbReference type="InterPro" id="IPR029760">
    <property type="entry name" value="GPX_CS"/>
</dbReference>
<dbReference type="InterPro" id="IPR036249">
    <property type="entry name" value="Thioredoxin-like_sf"/>
</dbReference>
<dbReference type="NCBIfam" id="TIGR02540">
    <property type="entry name" value="gpx7"/>
    <property type="match status" value="1"/>
</dbReference>
<dbReference type="PANTHER" id="PTHR11592">
    <property type="entry name" value="GLUTATHIONE PEROXIDASE"/>
    <property type="match status" value="1"/>
</dbReference>
<dbReference type="PANTHER" id="PTHR11592:SF5">
    <property type="entry name" value="GLUTATHIONE PEROXIDASE 7"/>
    <property type="match status" value="1"/>
</dbReference>
<dbReference type="Pfam" id="PF00255">
    <property type="entry name" value="GSHPx"/>
    <property type="match status" value="1"/>
</dbReference>
<dbReference type="PIRSF" id="PIRSF000303">
    <property type="entry name" value="Glutathion_perox"/>
    <property type="match status" value="1"/>
</dbReference>
<dbReference type="PRINTS" id="PR01011">
    <property type="entry name" value="GLUTPROXDASE"/>
</dbReference>
<dbReference type="SUPFAM" id="SSF52833">
    <property type="entry name" value="Thioredoxin-like"/>
    <property type="match status" value="1"/>
</dbReference>
<dbReference type="PROSITE" id="PS00460">
    <property type="entry name" value="GLUTATHIONE_PEROXID_1"/>
    <property type="match status" value="1"/>
</dbReference>
<dbReference type="PROSITE" id="PS00763">
    <property type="entry name" value="GLUTATHIONE_PEROXID_2"/>
    <property type="match status" value="1"/>
</dbReference>
<dbReference type="PROSITE" id="PS51355">
    <property type="entry name" value="GLUTATHIONE_PEROXID_3"/>
    <property type="match status" value="1"/>
</dbReference>
<organism>
    <name type="scientific">Mus musculus</name>
    <name type="common">Mouse</name>
    <dbReference type="NCBI Taxonomy" id="10090"/>
    <lineage>
        <taxon>Eukaryota</taxon>
        <taxon>Metazoa</taxon>
        <taxon>Chordata</taxon>
        <taxon>Craniata</taxon>
        <taxon>Vertebrata</taxon>
        <taxon>Euteleostomi</taxon>
        <taxon>Mammalia</taxon>
        <taxon>Eutheria</taxon>
        <taxon>Euarchontoglires</taxon>
        <taxon>Glires</taxon>
        <taxon>Rodentia</taxon>
        <taxon>Myomorpha</taxon>
        <taxon>Muroidea</taxon>
        <taxon>Muridae</taxon>
        <taxon>Murinae</taxon>
        <taxon>Mus</taxon>
        <taxon>Mus</taxon>
    </lineage>
</organism>
<accession>Q99LJ6</accession>
<sequence length="186" mass="21061">MVAAVATAWLLLWAAACAQSEQDFYDFKAVNIRGKLVSLEKYRGSVSLVVNVASECGFTDQNYRALQQLQRDLGPHHFNVLAFPCNQFGQQEPDTNREIENFARRTYSVSFPMFSKIAVTGTGAHPAFKYLTQTSGKEPTWNFWKYLVDPDGKVVGAWDPTVPVAEIKPRITEQVMKLILRKREDL</sequence>
<protein>
    <recommendedName>
        <fullName>Glutathione peroxidase 7</fullName>
        <shortName>GPx-7</shortName>
        <shortName>GSHPx-7</shortName>
        <ecNumber>1.11.1.9</ecNumber>
    </recommendedName>
</protein>
<feature type="signal peptide" evidence="2">
    <location>
        <begin position="1"/>
        <end position="18"/>
    </location>
</feature>
<feature type="chain" id="PRO_0000013085" description="Glutathione peroxidase 7">
    <location>
        <begin position="19"/>
        <end position="186"/>
    </location>
</feature>
<feature type="active site" evidence="1">
    <location>
        <position position="56"/>
    </location>
</feature>
<keyword id="KW-0560">Oxidoreductase</keyword>
<keyword id="KW-0575">Peroxidase</keyword>
<keyword id="KW-1185">Reference proteome</keyword>
<keyword id="KW-0964">Secreted</keyword>
<keyword id="KW-0732">Signal</keyword>
<name>GPX7_MOUSE</name>
<proteinExistence type="evidence at protein level"/>
<evidence type="ECO:0000250" key="1"/>
<evidence type="ECO:0000255" key="2"/>
<evidence type="ECO:0000305" key="3"/>
<gene>
    <name type="primary">Gpx7</name>
</gene>
<reference key="1">
    <citation type="journal article" date="2004" name="Genome Res.">
        <title>The status, quality, and expansion of the NIH full-length cDNA project: the Mammalian Gene Collection (MGC).</title>
        <authorList>
            <consortium name="The MGC Project Team"/>
        </authorList>
    </citation>
    <scope>NUCLEOTIDE SEQUENCE [LARGE SCALE MRNA]</scope>
</reference>
<reference key="2">
    <citation type="journal article" date="2010" name="Cell">
        <title>A tissue-specific atlas of mouse protein phosphorylation and expression.</title>
        <authorList>
            <person name="Huttlin E.L."/>
            <person name="Jedrychowski M.P."/>
            <person name="Elias J.E."/>
            <person name="Goswami T."/>
            <person name="Rad R."/>
            <person name="Beausoleil S.A."/>
            <person name="Villen J."/>
            <person name="Haas W."/>
            <person name="Sowa M.E."/>
            <person name="Gygi S.P."/>
        </authorList>
    </citation>
    <scope>IDENTIFICATION BY MASS SPECTROMETRY [LARGE SCALE ANALYSIS]</scope>
    <source>
        <tissue>Brain</tissue>
        <tissue>Brown adipose tissue</tissue>
        <tissue>Heart</tissue>
        <tissue>Kidney</tissue>
        <tissue>Liver</tissue>
        <tissue>Lung</tissue>
        <tissue>Spleen</tissue>
        <tissue>Testis</tissue>
    </source>
</reference>